<dbReference type="EMBL" id="AF006040">
    <property type="protein sequence ID" value="AAC53284.1"/>
    <property type="molecule type" value="mRNA"/>
</dbReference>
<dbReference type="EMBL" id="AF110520">
    <property type="protein sequence ID" value="AAC97971.1"/>
    <property type="molecule type" value="Genomic_DNA"/>
</dbReference>
<dbReference type="EMBL" id="AF100956">
    <property type="protein sequence ID" value="AAC69891.1"/>
    <property type="molecule type" value="Genomic_DNA"/>
</dbReference>
<dbReference type="RefSeq" id="NP_001186662.1">
    <property type="nucleotide sequence ID" value="NM_001199733.1"/>
</dbReference>
<dbReference type="RefSeq" id="NP_031855.3">
    <property type="nucleotide sequence ID" value="NM_007829.4"/>
</dbReference>
<dbReference type="RefSeq" id="XP_006523643.1">
    <property type="nucleotide sequence ID" value="XM_006523580.2"/>
</dbReference>
<dbReference type="RefSeq" id="XP_006523644.1">
    <property type="nucleotide sequence ID" value="XM_006523581.2"/>
</dbReference>
<dbReference type="RefSeq" id="XP_006523645.1">
    <property type="nucleotide sequence ID" value="XM_006523582.2"/>
</dbReference>
<dbReference type="BMRB" id="O35613"/>
<dbReference type="SMR" id="O35613"/>
<dbReference type="BioGRID" id="199054">
    <property type="interactions" value="26"/>
</dbReference>
<dbReference type="CORUM" id="O35613"/>
<dbReference type="DIP" id="DIP-30972N"/>
<dbReference type="FunCoup" id="O35613">
    <property type="interactions" value="1431"/>
</dbReference>
<dbReference type="IntAct" id="O35613">
    <property type="interactions" value="18"/>
</dbReference>
<dbReference type="MINT" id="O35613"/>
<dbReference type="STRING" id="10090.ENSMUSP00000128504"/>
<dbReference type="iPTMnet" id="O35613"/>
<dbReference type="PhosphoSitePlus" id="O35613"/>
<dbReference type="jPOST" id="O35613"/>
<dbReference type="PaxDb" id="10090-ENSMUSP00000128504"/>
<dbReference type="PeptideAtlas" id="O35613"/>
<dbReference type="ProteomicsDB" id="279877"/>
<dbReference type="Pumba" id="O35613"/>
<dbReference type="DNASU" id="13163"/>
<dbReference type="GeneID" id="13163"/>
<dbReference type="KEGG" id="mmu:13163"/>
<dbReference type="AGR" id="MGI:1197015"/>
<dbReference type="CTD" id="1616"/>
<dbReference type="MGI" id="MGI:1197015">
    <property type="gene designation" value="Daxx"/>
</dbReference>
<dbReference type="eggNOG" id="ENOG502QRS6">
    <property type="taxonomic scope" value="Eukaryota"/>
</dbReference>
<dbReference type="InParanoid" id="O35613"/>
<dbReference type="OrthoDB" id="7492809at2759"/>
<dbReference type="PhylomeDB" id="O35613"/>
<dbReference type="Reactome" id="R-MMU-3899300">
    <property type="pathway name" value="SUMOylation of transcription cofactors"/>
</dbReference>
<dbReference type="Reactome" id="R-MMU-6804757">
    <property type="pathway name" value="Regulation of TP53 Degradation"/>
</dbReference>
<dbReference type="Reactome" id="R-MMU-9670095">
    <property type="pathway name" value="Inhibition of DNA recombination at telomere"/>
</dbReference>
<dbReference type="BioGRID-ORCS" id="13163">
    <property type="hits" value="11 hits in 81 CRISPR screens"/>
</dbReference>
<dbReference type="CD-CODE" id="2E092FC3">
    <property type="entry name" value="PML body"/>
</dbReference>
<dbReference type="CD-CODE" id="D41CB90A">
    <property type="entry name" value="Synthetic Condensate 000316"/>
</dbReference>
<dbReference type="ChiTaRS" id="Daxx">
    <property type="organism name" value="mouse"/>
</dbReference>
<dbReference type="PRO" id="PR:O35613"/>
<dbReference type="Proteomes" id="UP000000589">
    <property type="component" value="Unplaced"/>
</dbReference>
<dbReference type="RNAct" id="O35613">
    <property type="molecule type" value="protein"/>
</dbReference>
<dbReference type="GO" id="GO:0000775">
    <property type="term" value="C:chromosome, centromeric region"/>
    <property type="evidence" value="ECO:0007669"/>
    <property type="project" value="UniProtKB-SubCell"/>
</dbReference>
<dbReference type="GO" id="GO:0005829">
    <property type="term" value="C:cytosol"/>
    <property type="evidence" value="ECO:0000314"/>
    <property type="project" value="UniProtKB"/>
</dbReference>
<dbReference type="GO" id="GO:0000792">
    <property type="term" value="C:heterochromatin"/>
    <property type="evidence" value="ECO:0000314"/>
    <property type="project" value="MGI"/>
</dbReference>
<dbReference type="GO" id="GO:0005730">
    <property type="term" value="C:nucleolus"/>
    <property type="evidence" value="ECO:0007669"/>
    <property type="project" value="UniProtKB-SubCell"/>
</dbReference>
<dbReference type="GO" id="GO:0005634">
    <property type="term" value="C:nucleus"/>
    <property type="evidence" value="ECO:0000314"/>
    <property type="project" value="UniProtKB"/>
</dbReference>
<dbReference type="GO" id="GO:0016605">
    <property type="term" value="C:PML body"/>
    <property type="evidence" value="ECO:0000314"/>
    <property type="project" value="UniProtKB"/>
</dbReference>
<dbReference type="GO" id="GO:0042393">
    <property type="term" value="F:histone binding"/>
    <property type="evidence" value="ECO:0000314"/>
    <property type="project" value="UniProtKB"/>
</dbReference>
<dbReference type="GO" id="GO:0050681">
    <property type="term" value="F:nuclear androgen receptor binding"/>
    <property type="evidence" value="ECO:0000250"/>
    <property type="project" value="UniProtKB"/>
</dbReference>
<dbReference type="GO" id="GO:0042803">
    <property type="term" value="F:protein homodimerization activity"/>
    <property type="evidence" value="ECO:0000250"/>
    <property type="project" value="UniProtKB"/>
</dbReference>
<dbReference type="GO" id="GO:0061629">
    <property type="term" value="F:RNA polymerase II-specific DNA-binding transcription factor binding"/>
    <property type="evidence" value="ECO:0000250"/>
    <property type="project" value="UniProtKB"/>
</dbReference>
<dbReference type="GO" id="GO:0003713">
    <property type="term" value="F:transcription coactivator activity"/>
    <property type="evidence" value="ECO:0000314"/>
    <property type="project" value="UniProtKB"/>
</dbReference>
<dbReference type="GO" id="GO:0003714">
    <property type="term" value="F:transcription corepressor activity"/>
    <property type="evidence" value="ECO:0000304"/>
    <property type="project" value="UniProtKB"/>
</dbReference>
<dbReference type="GO" id="GO:0030521">
    <property type="term" value="P:androgen receptor signaling pathway"/>
    <property type="evidence" value="ECO:0000250"/>
    <property type="project" value="UniProtKB"/>
</dbReference>
<dbReference type="GO" id="GO:0097190">
    <property type="term" value="P:apoptotic signaling pathway"/>
    <property type="evidence" value="ECO:0000316"/>
    <property type="project" value="MGI"/>
</dbReference>
<dbReference type="GO" id="GO:0008283">
    <property type="term" value="P:cell population proliferation"/>
    <property type="evidence" value="ECO:0000316"/>
    <property type="project" value="MGI"/>
</dbReference>
<dbReference type="GO" id="GO:0071276">
    <property type="term" value="P:cellular response to cadmium ion"/>
    <property type="evidence" value="ECO:0000250"/>
    <property type="project" value="UniProtKB"/>
</dbReference>
<dbReference type="GO" id="GO:0071280">
    <property type="term" value="P:cellular response to copper ion"/>
    <property type="evidence" value="ECO:0000250"/>
    <property type="project" value="UniProtKB"/>
</dbReference>
<dbReference type="GO" id="GO:0072738">
    <property type="term" value="P:cellular response to diamide"/>
    <property type="evidence" value="ECO:0000250"/>
    <property type="project" value="UniProtKB"/>
</dbReference>
<dbReference type="GO" id="GO:0034605">
    <property type="term" value="P:cellular response to heat"/>
    <property type="evidence" value="ECO:0000250"/>
    <property type="project" value="UniProtKB"/>
</dbReference>
<dbReference type="GO" id="GO:1903936">
    <property type="term" value="P:cellular response to sodium arsenite"/>
    <property type="evidence" value="ECO:0000250"/>
    <property type="project" value="UniProtKB"/>
</dbReference>
<dbReference type="GO" id="GO:0034620">
    <property type="term" value="P:cellular response to unfolded protein"/>
    <property type="evidence" value="ECO:0000250"/>
    <property type="project" value="UniProtKB"/>
</dbReference>
<dbReference type="GO" id="GO:0000281">
    <property type="term" value="P:mitotic cytokinesis"/>
    <property type="evidence" value="ECO:0000315"/>
    <property type="project" value="MGI"/>
</dbReference>
<dbReference type="GO" id="GO:0043066">
    <property type="term" value="P:negative regulation of apoptotic process"/>
    <property type="evidence" value="ECO:0000315"/>
    <property type="project" value="MGI"/>
</dbReference>
<dbReference type="GO" id="GO:0045892">
    <property type="term" value="P:negative regulation of DNA-templated transcription"/>
    <property type="evidence" value="ECO:0000314"/>
    <property type="project" value="MGI"/>
</dbReference>
<dbReference type="GO" id="GO:0006334">
    <property type="term" value="P:nucleosome assembly"/>
    <property type="evidence" value="ECO:0000315"/>
    <property type="project" value="UniProtKB"/>
</dbReference>
<dbReference type="GO" id="GO:2001235">
    <property type="term" value="P:positive regulation of apoptotic signaling pathway"/>
    <property type="evidence" value="ECO:0000314"/>
    <property type="project" value="MGI"/>
</dbReference>
<dbReference type="GO" id="GO:0045944">
    <property type="term" value="P:positive regulation of transcription by RNA polymerase II"/>
    <property type="evidence" value="ECO:0000315"/>
    <property type="project" value="UniProtKB"/>
</dbReference>
<dbReference type="GO" id="GO:0071168">
    <property type="term" value="P:protein localization to chromatin"/>
    <property type="evidence" value="ECO:0000315"/>
    <property type="project" value="CAFA"/>
</dbReference>
<dbReference type="GO" id="GO:0006355">
    <property type="term" value="P:regulation of DNA-templated transcription"/>
    <property type="evidence" value="ECO:0000266"/>
    <property type="project" value="MGI"/>
</dbReference>
<dbReference type="GO" id="GO:0040014">
    <property type="term" value="P:regulation of multicellular organism growth"/>
    <property type="evidence" value="ECO:0000315"/>
    <property type="project" value="MGI"/>
</dbReference>
<dbReference type="GO" id="GO:0031396">
    <property type="term" value="P:regulation of protein ubiquitination"/>
    <property type="evidence" value="ECO:0000250"/>
    <property type="project" value="UniProtKB"/>
</dbReference>
<dbReference type="CDD" id="cd13151">
    <property type="entry name" value="DAXX_helical_bundle"/>
    <property type="match status" value="1"/>
</dbReference>
<dbReference type="CDD" id="cd13150">
    <property type="entry name" value="DAXX_histone_binding"/>
    <property type="match status" value="1"/>
</dbReference>
<dbReference type="DisProt" id="DP00708"/>
<dbReference type="FunFam" id="1.10.8.810:FF:000001">
    <property type="entry name" value="Death domain-associated protein 6"/>
    <property type="match status" value="1"/>
</dbReference>
<dbReference type="FunFam" id="1.20.58.2170:FF:000001">
    <property type="entry name" value="Death domain-associated protein 6"/>
    <property type="match status" value="1"/>
</dbReference>
<dbReference type="Gene3D" id="1.20.58.2170">
    <property type="match status" value="1"/>
</dbReference>
<dbReference type="Gene3D" id="1.10.8.810">
    <property type="entry name" value="Daxx helical bundle domain"/>
    <property type="match status" value="1"/>
</dbReference>
<dbReference type="InterPro" id="IPR046378">
    <property type="entry name" value="DAXX_histone-bd"/>
</dbReference>
<dbReference type="InterPro" id="IPR046426">
    <property type="entry name" value="DAXX_histone-bd_sf"/>
</dbReference>
<dbReference type="InterPro" id="IPR031333">
    <property type="entry name" value="Daxx_N"/>
</dbReference>
<dbReference type="InterPro" id="IPR038298">
    <property type="entry name" value="Daxx_N_sf"/>
</dbReference>
<dbReference type="PANTHER" id="PTHR12766:SF7">
    <property type="entry name" value="DEATH DOMAIN-ASSOCIATED PROTEIN 6"/>
    <property type="match status" value="1"/>
</dbReference>
<dbReference type="PANTHER" id="PTHR12766">
    <property type="entry name" value="DEATH DOMAIN-ASSOCIATED PROTEIN 6 DAXX"/>
    <property type="match status" value="1"/>
</dbReference>
<dbReference type="Pfam" id="PF03344">
    <property type="entry name" value="Daxx"/>
    <property type="match status" value="1"/>
</dbReference>
<dbReference type="Pfam" id="PF20920">
    <property type="entry name" value="DAXX_hist_bd"/>
    <property type="match status" value="1"/>
</dbReference>
<protein>
    <recommendedName>
        <fullName>Death domain-associated protein 6</fullName>
    </recommendedName>
    <alternativeName>
        <fullName>Daxx</fullName>
    </alternativeName>
</protein>
<organism>
    <name type="scientific">Mus musculus</name>
    <name type="common">Mouse</name>
    <dbReference type="NCBI Taxonomy" id="10090"/>
    <lineage>
        <taxon>Eukaryota</taxon>
        <taxon>Metazoa</taxon>
        <taxon>Chordata</taxon>
        <taxon>Craniata</taxon>
        <taxon>Vertebrata</taxon>
        <taxon>Euteleostomi</taxon>
        <taxon>Mammalia</taxon>
        <taxon>Eutheria</taxon>
        <taxon>Euarchontoglires</taxon>
        <taxon>Glires</taxon>
        <taxon>Rodentia</taxon>
        <taxon>Myomorpha</taxon>
        <taxon>Muroidea</taxon>
        <taxon>Muridae</taxon>
        <taxon>Murinae</taxon>
        <taxon>Mus</taxon>
        <taxon>Mus</taxon>
    </lineage>
</organism>
<evidence type="ECO:0000250" key="1"/>
<evidence type="ECO:0000250" key="2">
    <source>
        <dbReference type="UniProtKB" id="Q8VIB2"/>
    </source>
</evidence>
<evidence type="ECO:0000250" key="3">
    <source>
        <dbReference type="UniProtKB" id="Q9UER7"/>
    </source>
</evidence>
<evidence type="ECO:0000255" key="4"/>
<evidence type="ECO:0000256" key="5">
    <source>
        <dbReference type="SAM" id="MobiDB-lite"/>
    </source>
</evidence>
<evidence type="ECO:0000269" key="6">
    <source>
    </source>
</evidence>
<evidence type="ECO:0000269" key="7">
    <source>
    </source>
</evidence>
<evidence type="ECO:0000269" key="8">
    <source>
    </source>
</evidence>
<evidence type="ECO:0000269" key="9">
    <source>
    </source>
</evidence>
<evidence type="ECO:0000269" key="10">
    <source>
    </source>
</evidence>
<evidence type="ECO:0000269" key="11">
    <source>
    </source>
</evidence>
<evidence type="ECO:0000269" key="12">
    <source>
    </source>
</evidence>
<evidence type="ECO:0000269" key="13">
    <source>
    </source>
</evidence>
<evidence type="ECO:0000305" key="14"/>
<evidence type="ECO:0007744" key="15">
    <source>
    </source>
</evidence>
<sequence>MATDDSIIVLDDDDEDEAAAQPGPSNLPPNPASTGPGPGLSQQATGLSEPRVDGGSSNSGSRKCYKLDNEKLFEEFLELCKTETSDHPEVVPFLHKLQQRAQSVFLASAEFCNILSRVLARSRKRPAKIYVYINELCTVLKAHSIKKKLNLAPAASTTSEASGPNPPTEPPSDLTNTENTASEASRTRGSRRQIQRLEQLLALYVAEIRRLQEKELDLSELDDPDSSYLQEARLKRKLIRLFGRLCELKDCSSLTGRVIEQRIPYRGTRYPEVNRRIERLINKPGLDTFPDYGDVLRAVEKAATRHSLGLPRQQLQLLAQDAFRDVGVRLQERRHLDLIYNFGCHLTDDYRPGVDPALSDPTLARRLRENRTLAMNRLDEVISKYAMMQDKTEEGERQKRRARLLGTAPQPSDPPQASSESGEGPSGMASQECPTTSKAETDDDDDDDDDDDEDNEESEEEEEEEEEEKEATEDEDEDLEQLQEDQGGDEEEEGGDNEGNESPTSPSDFFHRRNSEPAEGLRTPEGQQKRGLTETPASPPGASLDPPSTDAESSGEQLLEPLLGDESPVSQLAELEMEALPEERDISSPRKKSEDSLPTILENGAAVVTSTSVNGRVSSHTWRDASPPSKRFRKEKKQLGSGLLGNSYIKEPMAQQDSGQNTSVQPMPSPPLASVASVADSSTRVDSPSHELVTSSLCSPSPSLLLQTPQAQSLRQCIYKTSVATQCDPEEIIVLSDSD</sequence>
<feature type="chain" id="PRO_0000151259" description="Death domain-associated protein 6">
    <location>
        <begin position="1"/>
        <end position="739"/>
    </location>
</feature>
<feature type="region of interest" description="Necessary for interaction with USP7 and ATRX" evidence="1">
    <location>
        <begin position="1"/>
        <end position="166"/>
    </location>
</feature>
<feature type="region of interest" description="Disordered" evidence="5">
    <location>
        <begin position="1"/>
        <end position="60"/>
    </location>
</feature>
<feature type="region of interest" description="Disordered" evidence="5">
    <location>
        <begin position="155"/>
        <end position="191"/>
    </location>
</feature>
<feature type="region of interest" description="Interaction with histone H3.3" evidence="1">
    <location>
        <begin position="189"/>
        <end position="423"/>
    </location>
</feature>
<feature type="region of interest" description="Necessary for interaction with USP7" evidence="1">
    <location>
        <begin position="353"/>
        <end position="576"/>
    </location>
</feature>
<feature type="region of interest" description="Disordered" evidence="5">
    <location>
        <begin position="405"/>
        <end position="599"/>
    </location>
</feature>
<feature type="region of interest" description="Disordered" evidence="5">
    <location>
        <begin position="611"/>
        <end position="688"/>
    </location>
</feature>
<feature type="region of interest" description="Interaction with SPOP" evidence="1">
    <location>
        <begin position="626"/>
        <end position="739"/>
    </location>
</feature>
<feature type="region of interest" description="Sumo interaction motif (SIM)" evidence="1">
    <location>
        <begin position="732"/>
        <end position="739"/>
    </location>
</feature>
<feature type="coiled-coil region" evidence="4">
    <location>
        <begin position="185"/>
        <end position="223"/>
    </location>
</feature>
<feature type="coiled-coil region" evidence="4">
    <location>
        <begin position="364"/>
        <end position="403"/>
    </location>
</feature>
<feature type="coiled-coil region" evidence="4">
    <location>
        <begin position="445"/>
        <end position="488"/>
    </location>
</feature>
<feature type="short sequence motif" description="Nuclear localization signal" evidence="4">
    <location>
        <begin position="391"/>
        <end position="395"/>
    </location>
</feature>
<feature type="short sequence motif" description="Nuclear localization signal" evidence="4">
    <location>
        <begin position="622"/>
        <end position="628"/>
    </location>
</feature>
<feature type="compositionally biased region" description="Polar residues" evidence="5">
    <location>
        <begin position="173"/>
        <end position="184"/>
    </location>
</feature>
<feature type="compositionally biased region" description="Acidic residues" evidence="5">
    <location>
        <begin position="441"/>
        <end position="499"/>
    </location>
</feature>
<feature type="compositionally biased region" description="Basic and acidic residues" evidence="5">
    <location>
        <begin position="581"/>
        <end position="595"/>
    </location>
</feature>
<feature type="compositionally biased region" description="Polar residues" evidence="5">
    <location>
        <begin position="611"/>
        <end position="620"/>
    </location>
</feature>
<feature type="compositionally biased region" description="Polar residues" evidence="5">
    <location>
        <begin position="655"/>
        <end position="666"/>
    </location>
</feature>
<feature type="modified residue" description="Phosphoserine" evidence="3">
    <location>
        <position position="25"/>
    </location>
</feature>
<feature type="modified residue" description="Phosphoserine" evidence="9">
    <location>
        <position position="219"/>
    </location>
</feature>
<feature type="modified residue" description="Phosphoserine" evidence="3">
    <location>
        <position position="418"/>
    </location>
</feature>
<feature type="modified residue" description="Phosphoserine" evidence="3">
    <location>
        <position position="430"/>
    </location>
</feature>
<feature type="modified residue" description="Phosphothreonine" evidence="9">
    <location>
        <position position="472"/>
    </location>
</feature>
<feature type="modified residue" description="Phosphoserine" evidence="9">
    <location>
        <position position="502"/>
    </location>
</feature>
<feature type="modified residue" description="Phosphoserine" evidence="2">
    <location>
        <position position="505"/>
    </location>
</feature>
<feature type="modified residue" description="Phosphoserine" evidence="2">
    <location>
        <position position="507"/>
    </location>
</feature>
<feature type="modified residue" description="Phosphoserine" evidence="9">
    <location>
        <position position="515"/>
    </location>
</feature>
<feature type="modified residue" description="Phosphothreonine" evidence="9">
    <location>
        <position position="523"/>
    </location>
</feature>
<feature type="modified residue" description="Phosphoserine" evidence="2">
    <location>
        <position position="543"/>
    </location>
</feature>
<feature type="modified residue" description="Phosphoserine" evidence="2">
    <location>
        <position position="567"/>
    </location>
</feature>
<feature type="modified residue" description="Phosphoserine" evidence="9">
    <location>
        <position position="626"/>
    </location>
</feature>
<feature type="modified residue" description="Phosphoserine; by HIPK1" evidence="9">
    <location>
        <position position="669"/>
    </location>
</feature>
<feature type="modified residue" description="Phosphoserine" evidence="15">
    <location>
        <position position="687"/>
    </location>
</feature>
<feature type="modified residue" description="Phosphoserine" evidence="3">
    <location>
        <position position="701"/>
    </location>
</feature>
<feature type="modified residue" description="Phosphoserine" evidence="15">
    <location>
        <position position="736"/>
    </location>
</feature>
<feature type="modified residue" description="Phosphoserine" evidence="15">
    <location>
        <position position="738"/>
    </location>
</feature>
<feature type="cross-link" description="Glycyl lysine isopeptide (Lys-Gly) (interchain with G-Cter in SUMO2)" evidence="3">
    <location>
        <position position="148"/>
    </location>
</feature>
<feature type="cross-link" description="Glycyl lysine isopeptide (Lys-Gly) (interchain with G-Cter in SUMO1)" evidence="3">
    <location>
        <position position="630"/>
    </location>
</feature>
<feature type="mutagenesis site" description="No effect on phosphorylation by HIPK1." evidence="9">
    <original>S</original>
    <variation>A</variation>
    <location>
        <position position="502"/>
    </location>
</feature>
<feature type="mutagenesis site" description="Diminishes phosphorylation by HIPK1." evidence="9">
    <original>S</original>
    <variation>A</variation>
    <location>
        <position position="669"/>
    </location>
</feature>
<feature type="sequence conflict" description="In Ref. 2; AAC97971." evidence="14" ref="2">
    <original>Q</original>
    <variation>K</variation>
    <location>
        <position position="416"/>
    </location>
</feature>
<feature type="sequence conflict" description="In Ref. 2; AAC97971." evidence="14" ref="2">
    <original>D</original>
    <variation>DD</variation>
    <location>
        <position position="452"/>
    </location>
</feature>
<feature type="sequence conflict" description="In Ref. 2; AAC97971." evidence="14" ref="2">
    <original>P</original>
    <variation>S</variation>
    <location>
        <position position="589"/>
    </location>
</feature>
<reference key="1">
    <citation type="journal article" date="1997" name="Cell">
        <title>Daxx, a novel Fas-binding protein that activates JNK and apoptosis.</title>
        <authorList>
            <person name="Yang X."/>
            <person name="Khosravi-Far R."/>
            <person name="Chang H.Y."/>
            <person name="Baltimore D."/>
        </authorList>
    </citation>
    <scope>NUCLEOTIDE SEQUENCE [MRNA]</scope>
    <source>
        <tissue>Thymus</tissue>
    </source>
</reference>
<reference key="2">
    <citation type="submission" date="1998-10" db="EMBL/GenBank/DDBJ databases">
        <title>Sequence of the mouse major histocompatibility complex class II region.</title>
        <authorList>
            <person name="Rowen L."/>
            <person name="Qin S."/>
            <person name="Madan A."/>
            <person name="Loretz C."/>
            <person name="James R."/>
            <person name="Dors M."/>
            <person name="Mix L."/>
            <person name="Hall J."/>
            <person name="Lasky S."/>
            <person name="Hood L."/>
        </authorList>
    </citation>
    <scope>NUCLEOTIDE SEQUENCE [LARGE SCALE GENOMIC DNA]</scope>
    <source>
        <strain>129/SvJ</strain>
    </source>
</reference>
<reference key="3">
    <citation type="journal article" date="2000" name="J. Exp. Med.">
        <title>Promyelocytic leukemia protein (PML) and Daxx participate in a novel nuclear pathway for apoptosis.</title>
        <authorList>
            <person name="Zhong S."/>
            <person name="Salomoni P."/>
            <person name="Ronchetti S."/>
            <person name="Guo A."/>
            <person name="Ruggero D."/>
            <person name="Pandolfi P.P."/>
        </authorList>
    </citation>
    <scope>FUNCTION</scope>
    <scope>SUBCELLULAR LOCATION</scope>
    <scope>INTERACTION WITH PML</scope>
</reference>
<reference key="4">
    <citation type="journal article" date="2000" name="J. Exp. Med.">
        <title>FIST/HIPK3: a Fas/FADD-interacting serine/threonine kinase that induces FADD phosphorylation and inhibits Fas-mediated Jun NH2-terminal kinase activation.</title>
        <authorList>
            <person name="Rochat-Steiner V."/>
            <person name="Becker K."/>
            <person name="Micheau O."/>
            <person name="Schneider P."/>
            <person name="Burns K."/>
            <person name="Tschopp J."/>
        </authorList>
    </citation>
    <scope>INTERACTION WITH HIPK3</scope>
</reference>
<reference key="5">
    <citation type="journal article" date="2002" name="J. Biol. Chem.">
        <title>The interaction of Pax5 (BSAP) with Daxx can result in transcriptional activation in B cells.</title>
        <authorList>
            <person name="Emelyanov A.V."/>
            <person name="Kovac C.R."/>
            <person name="Sepulveda M.A."/>
            <person name="Birshtein B.K."/>
        </authorList>
    </citation>
    <scope>INTERACTION WITH PAX5</scope>
</reference>
<reference key="6">
    <citation type="journal article" date="2003" name="Mol. Cell. Biol.">
        <title>Homeodomain-interacting protein kinase 1 modulates Daxx localization, phosphorylation, and transcriptional activity.</title>
        <authorList>
            <person name="Ecsedy J.A."/>
            <person name="Michaelson J.S."/>
            <person name="Leder P."/>
        </authorList>
    </citation>
    <scope>INTERACTION WITH HIPK1</scope>
    <scope>MUTAGENESIS OF SER-502 AND SER-669</scope>
    <scope>PHOSPHORYLATION AT SER-219; THR-472; SER-502; SER-515; THR-523; SER-626 AND SER-669</scope>
    <scope>IDENTIFICATION BY MASS SPECTROMETRY</scope>
</reference>
<reference key="7">
    <citation type="journal article" date="2005" name="Proc. Natl. Acad. Sci. U.S.A.">
        <title>SUMO modification negatively modulates the transcriptional activity of CREB-binding protein via the recruitment of Daxx.</title>
        <authorList>
            <person name="Kuo H.-Y."/>
            <person name="Chang C.-C."/>
            <person name="Jeng J.-C."/>
            <person name="Hu H.-M."/>
            <person name="Lin D.-Y."/>
            <person name="Maul G.G."/>
            <person name="Kwok R.P.S."/>
            <person name="Shih H.-M."/>
        </authorList>
    </citation>
    <scope>INTERACTION WITH CBP</scope>
</reference>
<reference key="8">
    <citation type="journal article" date="2010" name="Cell">
        <title>A tissue-specific atlas of mouse protein phosphorylation and expression.</title>
        <authorList>
            <person name="Huttlin E.L."/>
            <person name="Jedrychowski M.P."/>
            <person name="Elias J.E."/>
            <person name="Goswami T."/>
            <person name="Rad R."/>
            <person name="Beausoleil S.A."/>
            <person name="Villen J."/>
            <person name="Haas W."/>
            <person name="Sowa M.E."/>
            <person name="Gygi S.P."/>
        </authorList>
    </citation>
    <scope>PHOSPHORYLATION [LARGE SCALE ANALYSIS] AT SER-687; SER-736 AND SER-738</scope>
    <scope>IDENTIFICATION BY MASS SPECTROMETRY [LARGE SCALE ANALYSIS]</scope>
    <source>
        <tissue>Brain</tissue>
        <tissue>Kidney</tissue>
        <tissue>Liver</tissue>
        <tissue>Lung</tissue>
        <tissue>Spleen</tissue>
        <tissue>Testis</tissue>
    </source>
</reference>
<reference key="9">
    <citation type="journal article" date="2010" name="Genes Dev.">
        <title>The death-associated protein DAXX is a novel histone chaperone involved in the replication-independent deposition of H3.3.</title>
        <authorList>
            <person name="Drane P."/>
            <person name="Ouararhni K."/>
            <person name="Depaux A."/>
            <person name="Shuaib M."/>
            <person name="Hamiche A."/>
        </authorList>
    </citation>
    <scope>INTERACTION WITH HISTONE H3.3</scope>
</reference>
<reference key="10">
    <citation type="journal article" date="2010" name="Proc. Natl. Acad. Sci. U.S.A.">
        <title>Daxx is an H3.3-specific histone chaperone and cooperates with ATRX in replication-independent chromatin assembly at telomeres.</title>
        <authorList>
            <person name="Lewis P.W."/>
            <person name="Elsaesser S.J."/>
            <person name="Noh K.M."/>
            <person name="Stadler S.C."/>
            <person name="Allis C.D."/>
        </authorList>
    </citation>
    <scope>FUNCTION AS HISTONE CHAPERONE</scope>
</reference>
<reference key="11">
    <citation type="journal article" date="2012" name="Neuron">
        <title>Calcium-dependent dephosphorylation of the histone chaperone DAXX regulates H3.3 loading and transcription upon neuronal activation.</title>
        <authorList>
            <person name="Michod D."/>
            <person name="Bartesaghi S."/>
            <person name="Khelifi A."/>
            <person name="Bellodi C."/>
            <person name="Berliocchi L."/>
            <person name="Nicotera P."/>
            <person name="Salomoni P."/>
        </authorList>
    </citation>
    <scope>FUNCTION IN HISTONE H3.3 DEPOSITION</scope>
    <scope>SUBCELLULAR LOCATION</scope>
    <scope>DEPHOSPHORYLATION AT SER-669 BY CALCINEURIN</scope>
    <scope>DEVELOPMENTAL STAGE</scope>
</reference>
<keyword id="KW-0053">Apoptosis</keyword>
<keyword id="KW-0137">Centromere</keyword>
<keyword id="KW-0143">Chaperone</keyword>
<keyword id="KW-0156">Chromatin regulator</keyword>
<keyword id="KW-0158">Chromosome</keyword>
<keyword id="KW-0175">Coiled coil</keyword>
<keyword id="KW-0963">Cytoplasm</keyword>
<keyword id="KW-1017">Isopeptide bond</keyword>
<keyword id="KW-0539">Nucleus</keyword>
<keyword id="KW-0597">Phosphoprotein</keyword>
<keyword id="KW-1185">Reference proteome</keyword>
<keyword id="KW-0678">Repressor</keyword>
<keyword id="KW-0804">Transcription</keyword>
<keyword id="KW-0805">Transcription regulation</keyword>
<keyword id="KW-0832">Ubl conjugation</keyword>
<comment type="function">
    <text evidence="3 6 12 13">Transcription corepressor known to repress transcriptional potential of several sumoylated transcription factors. Down-regulates basal and activated transcription. Its transcription repressor activity is modulated by recruiting it to subnuclear compartments like the nucleolus or PML/POD/ND10 nuclear bodies through interactions with MCSR1 and PML, respectively. Seems to regulate transcription in PML/POD/ND10 nuclear bodies together with PML and may influence TNFRSF6-dependent apoptosis thereby. Inhibits transcriptional activation of PAX3 and ETS1 through direct protein-protein interactions. Modulates PAX5 activity; the function seems to involve CREBBP. Acts as an adapter protein in a MDM2-DAXX-USP7 complex by regulating the RING-finger E3 ligase MDM2 ubiquitination activity. Under non-stress condition, in association with the deubiquitinating USP7, prevents MDM2 self-ubiquitination and enhances the intrinsic E3 ligase activity of MDM2 towards TP53, thereby promoting TP53 ubiquitination and subsequent proteasomal degradation. Upon DNA damage, its association with MDM2 and USP7 is disrupted, resulting in increased MDM2 autoubiquitination and consequently, MDM2 degradation, which leads to TP53 stabilization. Acts as a histone chaperone that facilitates deposition of histone H3.3. Acts as a targeting component of the chromatin remodeling complex ATRX:DAXX which has ATP-dependent DNA translocase activity and catalyzes the replication-independent deposition of histone H3.3 in pericentric DNA repeats outside S-phase and telomeres, and the in vitro remodeling of H3.3-containing nucleosomes. Does not affect the ATPase activity of ATRX but alleviates its transcription repression activity. Upon neuronal activation associates with regulatory elements of selected immediate early genes where it promotes deposition of histone H3.3 which may be linked to transcriptional induction of these genes. Required for the recruitment of histone H3.3:H4 dimers to PML-nuclear bodies (PML-NBs); the process is independent of ATRX and facilitated by ASF1A; PML-NBs are suggested to function as regulatory sites for the incorporation of newly synthesized histone H3.3 into chromatin. Proposed to mediate activation of the JNK pathway and apoptosis via MAP3K5 in response to signaling from TNFRSF6 and TGFBR2. Interaction with HSPB1/HSP27 may prevent interaction with TNFRSF6 and MAP3K5 and block DAXX-mediated apoptosis. In contrast, in lymphoid cells JNC activation and TNFRSF6-mediated apoptosis may not involve DAXX. Plays a role as a positive regulator of the heat shock transcription factor HSF1 activity during the stress protein response (By similarity).</text>
</comment>
<comment type="subunit">
    <text evidence="3 6 7 8 9 10 11">Homomultimer. Interacts (via C-terminus) with TNFRSF6 (via death domain). Interacts with PAX5, SLC2A4/GLUT4, MAP3K5, TGFBR2, phosphorylated dimeric HSPB1/HSP27, CENPC, ETS1, sumoylated PML, UBE2I, MCRS1 and TP53. Interacts (via N-terminus) with HIPK2 and HIPK3. Interacts with HIPK1, which induces translocation from PML/POD/ND10 nuclear bodies to chromatin and enhances association with HDAC1. Interacts (non-phosphorylated) with PAX3, PAX7, DEK, HDAC1, HDAC2, HDAC3, acetylated histone H4 and histones H2A, H2B, H3, H3.3 and H4. Interacts with SPOP; mediating CUL3-dependent proteasomal degradation. Interacts with CBP; the interaction is dependent the sumoylation of CBP and suppresses CBP transcriptional activity via recruitment of HDAC2 directly in the complex with TP53 and HIPK2. Interacts with AXIN1; the interaction stimulates the interaction of DAXX with TP53, stimulates 'Ser-46' phosphorylation of TP53 on and induces cell death on UV irradiation. Interacts with MDM2; the interaction is direct. Interacts with USP7; the interaction is direct and independent of MDM2 and TP53. Part of a complex with DAXX, MDM2 and USP7 under non-stress conditions. Interacts (via N-terminus) with RASSF1 (via C-terminus); the interaction is independent of MDM2 and TP53; RASSF1 isoform A disrupts interactions among MDM2, DAXX and USP7, thus contributing to the efficient activation of TP53 by promoting MDM2 self-ubiquitination in cell-cycle checkpoint control in response to DNA damage. Interacts with ATRX to form the chromatin remodeling complex ATRX:DAXX. Interacts with HSF1 (via homotrimeric form preferentially); this interaction relieves homotrimeric HSF1 from repression of its transcriptional activity by HSP90-dependent multichaperone complex upon heat shock (By similarity).</text>
</comment>
<comment type="interaction">
    <interactant intactId="EBI-77304">
        <id>O35613</id>
    </interactant>
    <interactant intactId="EBI-77359">
        <id>O54784</id>
        <label>Dapk3</label>
    </interactant>
    <organismsDiffer>false</organismsDiffer>
    <experiments>2</experiments>
</comment>
<comment type="interaction">
    <interactant intactId="EBI-77304">
        <id>O35613</id>
    </interactant>
    <interactant intactId="EBI-296206">
        <id>P25446</id>
        <label>Fas</label>
    </interactant>
    <organismsDiffer>false</organismsDiffer>
    <experiments>2</experiments>
</comment>
<comment type="interaction">
    <interactant intactId="EBI-77304">
        <id>O35613</id>
    </interactant>
    <interactant intactId="EBI-692945">
        <id>O88904</id>
        <label>Hipk1</label>
    </interactant>
    <organismsDiffer>false</organismsDiffer>
    <experiments>3</experiments>
</comment>
<comment type="interaction">
    <interactant intactId="EBI-77304">
        <id>O35613</id>
    </interactant>
    <interactant intactId="EBI-346909">
        <id>Q62318</id>
        <label>Trim28</label>
    </interactant>
    <organismsDiffer>false</organismsDiffer>
    <experiments>2</experiments>
</comment>
<comment type="subcellular location">
    <subcellularLocation>
        <location evidence="6">Cytoplasm</location>
    </subcellularLocation>
    <subcellularLocation>
        <location evidence="13">Nucleus</location>
        <location evidence="13">Nucleoplasm</location>
    </subcellularLocation>
    <subcellularLocation>
        <location evidence="6">Nucleus</location>
        <location evidence="6">PML body</location>
    </subcellularLocation>
    <subcellularLocation>
        <location evidence="3">Nucleus</location>
        <location evidence="3">Nucleolus</location>
    </subcellularLocation>
    <subcellularLocation>
        <location evidence="3">Chromosome</location>
        <location evidence="3">Centromere</location>
    </subcellularLocation>
    <text evidence="3">Dispersed throughout the nucleoplasm, in PML/POD/ND10 nuclear bodies, and in nucleoli. Colocalizes with histone H3.3, ATRX, HIRA and ASF1A at PML-nuclear bodies. Colocalizes with a subset of interphase centromeres, but is absent from mitotic centromeres. Detected in cytoplasmic punctate structures. Translocates from the nucleus to the cytoplasm upon glucose deprivation or oxidative stress. Colocalizes with RASSF1 in the nucleus. Colocalizes with USP7 in nucleoplasma with accumulation in speckled structures.</text>
</comment>
<comment type="developmental stage">
    <text evidence="13">Expressed as early as 12.5 dpc in the neuroepithelium (ventricular zone). At 17.5 dpc, expression becomes more pronounced in postmitotic cells of the cortical plate (CP). Early postnatally (postnatal day 2 [P2]) and in the adult brain (P30) expressed both in the cortex and in the hippocampus.</text>
</comment>
<comment type="domain">
    <text evidence="1">The Sumo interaction motif mediates Sumo binding, and is required both for sumoylation and binding to sumoylated targets.</text>
</comment>
<comment type="PTM">
    <text evidence="1">Sumoylated with SUMO1 on multiple lysine residues.</text>
</comment>
<comment type="PTM">
    <text evidence="9">Repressor activity is down-regulated upon Ser-669 phosphorylation. Upon neuronal activation dephosphorylated by calcineurin in a Ca2+ dependent manner at Ser-669; dephosphorylation positively affects histone H3.3 loading and transcriptional activation.</text>
</comment>
<comment type="PTM">
    <text evidence="1">Polyubiquitinated; which is promoted by CUL3 and SPOP and results in proteasomal degradation. Ubiquitinated by MDM2; inducing its degradation. Deubiquitinated by USP7; leading to stabilize it (By similarity).</text>
</comment>
<comment type="similarity">
    <text evidence="14">Belongs to the DAXX family.</text>
</comment>
<accession>O35613</accession>
<accession>Q9QWT8</accession>
<accession>Q9QWV3</accession>
<name>DAXX_MOUSE</name>
<gene>
    <name type="primary">Daxx</name>
</gene>
<proteinExistence type="evidence at protein level"/>